<proteinExistence type="evidence at protein level"/>
<reference key="1">
    <citation type="journal article" date="2000" name="Nature">
        <title>Sequence and analysis of chromosome 5 of the plant Arabidopsis thaliana.</title>
        <authorList>
            <person name="Tabata S."/>
            <person name="Kaneko T."/>
            <person name="Nakamura Y."/>
            <person name="Kotani H."/>
            <person name="Kato T."/>
            <person name="Asamizu E."/>
            <person name="Miyajima N."/>
            <person name="Sasamoto S."/>
            <person name="Kimura T."/>
            <person name="Hosouchi T."/>
            <person name="Kawashima K."/>
            <person name="Kohara M."/>
            <person name="Matsumoto M."/>
            <person name="Matsuno A."/>
            <person name="Muraki A."/>
            <person name="Nakayama S."/>
            <person name="Nakazaki N."/>
            <person name="Naruo K."/>
            <person name="Okumura S."/>
            <person name="Shinpo S."/>
            <person name="Takeuchi C."/>
            <person name="Wada T."/>
            <person name="Watanabe A."/>
            <person name="Yamada M."/>
            <person name="Yasuda M."/>
            <person name="Sato S."/>
            <person name="de la Bastide M."/>
            <person name="Huang E."/>
            <person name="Spiegel L."/>
            <person name="Gnoj L."/>
            <person name="O'Shaughnessy A."/>
            <person name="Preston R."/>
            <person name="Habermann K."/>
            <person name="Murray J."/>
            <person name="Johnson D."/>
            <person name="Rohlfing T."/>
            <person name="Nelson J."/>
            <person name="Stoneking T."/>
            <person name="Pepin K."/>
            <person name="Spieth J."/>
            <person name="Sekhon M."/>
            <person name="Armstrong J."/>
            <person name="Becker M."/>
            <person name="Belter E."/>
            <person name="Cordum H."/>
            <person name="Cordes M."/>
            <person name="Courtney L."/>
            <person name="Courtney W."/>
            <person name="Dante M."/>
            <person name="Du H."/>
            <person name="Edwards J."/>
            <person name="Fryman J."/>
            <person name="Haakensen B."/>
            <person name="Lamar E."/>
            <person name="Latreille P."/>
            <person name="Leonard S."/>
            <person name="Meyer R."/>
            <person name="Mulvaney E."/>
            <person name="Ozersky P."/>
            <person name="Riley A."/>
            <person name="Strowmatt C."/>
            <person name="Wagner-McPherson C."/>
            <person name="Wollam A."/>
            <person name="Yoakum M."/>
            <person name="Bell M."/>
            <person name="Dedhia N."/>
            <person name="Parnell L."/>
            <person name="Shah R."/>
            <person name="Rodriguez M."/>
            <person name="Hoon See L."/>
            <person name="Vil D."/>
            <person name="Baker J."/>
            <person name="Kirchoff K."/>
            <person name="Toth K."/>
            <person name="King L."/>
            <person name="Bahret A."/>
            <person name="Miller B."/>
            <person name="Marra M.A."/>
            <person name="Martienssen R."/>
            <person name="McCombie W.R."/>
            <person name="Wilson R.K."/>
            <person name="Murphy G."/>
            <person name="Bancroft I."/>
            <person name="Volckaert G."/>
            <person name="Wambutt R."/>
            <person name="Duesterhoeft A."/>
            <person name="Stiekema W."/>
            <person name="Pohl T."/>
            <person name="Entian K.-D."/>
            <person name="Terryn N."/>
            <person name="Hartley N."/>
            <person name="Bent E."/>
            <person name="Johnson S."/>
            <person name="Langham S.-A."/>
            <person name="McCullagh B."/>
            <person name="Robben J."/>
            <person name="Grymonprez B."/>
            <person name="Zimmermann W."/>
            <person name="Ramsperger U."/>
            <person name="Wedler H."/>
            <person name="Balke K."/>
            <person name="Wedler E."/>
            <person name="Peters S."/>
            <person name="van Staveren M."/>
            <person name="Dirkse W."/>
            <person name="Mooijman P."/>
            <person name="Klein Lankhorst R."/>
            <person name="Weitzenegger T."/>
            <person name="Bothe G."/>
            <person name="Rose M."/>
            <person name="Hauf J."/>
            <person name="Berneiser S."/>
            <person name="Hempel S."/>
            <person name="Feldpausch M."/>
            <person name="Lamberth S."/>
            <person name="Villarroel R."/>
            <person name="Gielen J."/>
            <person name="Ardiles W."/>
            <person name="Bents O."/>
            <person name="Lemcke K."/>
            <person name="Kolesov G."/>
            <person name="Mayer K.F.X."/>
            <person name="Rudd S."/>
            <person name="Schoof H."/>
            <person name="Schueller C."/>
            <person name="Zaccaria P."/>
            <person name="Mewes H.-W."/>
            <person name="Bevan M."/>
            <person name="Fransz P.F."/>
        </authorList>
    </citation>
    <scope>NUCLEOTIDE SEQUENCE [LARGE SCALE GENOMIC DNA]</scope>
    <source>
        <strain>cv. Columbia</strain>
    </source>
</reference>
<reference key="2">
    <citation type="journal article" date="2017" name="Plant J.">
        <title>Araport11: a complete reannotation of the Arabidopsis thaliana reference genome.</title>
        <authorList>
            <person name="Cheng C.Y."/>
            <person name="Krishnakumar V."/>
            <person name="Chan A.P."/>
            <person name="Thibaud-Nissen F."/>
            <person name="Schobel S."/>
            <person name="Town C.D."/>
        </authorList>
    </citation>
    <scope>GENOME REANNOTATION</scope>
    <source>
        <strain>cv. Columbia</strain>
    </source>
</reference>
<reference key="3">
    <citation type="submission" date="2005-06" db="EMBL/GenBank/DDBJ databases">
        <title>Arabidopsis ORF clones.</title>
        <authorList>
            <person name="Kim C.J."/>
            <person name="Chen H."/>
            <person name="Cheuk R.F."/>
            <person name="Shinn P."/>
            <person name="Ecker J.R."/>
        </authorList>
    </citation>
    <scope>NUCLEOTIDE SEQUENCE [LARGE SCALE MRNA]</scope>
    <source>
        <strain>cv. Columbia</strain>
    </source>
</reference>
<reference key="4">
    <citation type="journal article" date="2008" name="BMC Genomics">
        <title>Genome-wide and expression analysis of protein phosphatase 2C in rice and Arabidopsis.</title>
        <authorList>
            <person name="Xue T."/>
            <person name="Wang D."/>
            <person name="Zhang S."/>
            <person name="Ehlting J."/>
            <person name="Ni F."/>
            <person name="Jacab S."/>
            <person name="Zheng C."/>
            <person name="Zhong Y."/>
        </authorList>
    </citation>
    <scope>GENE FAMILY</scope>
    <scope>NOMENCLATURE</scope>
</reference>
<reference key="5">
    <citation type="journal article" date="2014" name="Plant Cell">
        <title>SAUR inhibition of PP2C-D phosphatases activates plasma membrane H+-ATPases to promote cell expansion in Arabidopsis.</title>
        <authorList>
            <person name="Spartz A.K."/>
            <person name="Ren H."/>
            <person name="Park M.Y."/>
            <person name="Grandt K.N."/>
            <person name="Lee S.H."/>
            <person name="Murphy A.S."/>
            <person name="Sussman M.R."/>
            <person name="Overvoorde P.J."/>
            <person name="Gray W.M."/>
        </authorList>
    </citation>
    <scope>FUNCTION</scope>
    <scope>MUTAGENESIS OF ASP-276</scope>
    <scope>DISRUPTION PHENOTYPE</scope>
    <scope>INTERACTION WITH SAUR19 AND AHA2</scope>
    <scope>SUBCELLULAR LOCATION</scope>
    <scope>GENE FAMILY</scope>
    <scope>NOMENCLATURE</scope>
    <source>
        <strain>cv. Columbia</strain>
    </source>
</reference>
<sequence>MVKPCWRIGAGMERSKINPTKVDGLTWYKDLGLHTFGEFSMAMIQANSVMEDQCQIESGPLTFNNPTVQGTFVGVYDGHGGPEASRFIADNIFPKLKKFASEGREISEQVISKAFAETDKDFLKTVTKQWPTNPQMASVGSCCLAGVICNGLVYIANTGDSRAVLGRSERGGVRAVQLSVEHNANLESARQELWSLHPNDPTILVMKHRLWRVKGVIQVTRSIGDAYLKRAEFNREPLLPKFRLPEHFTKPILSADPSVTITRLSPQDEFIILASDGLWEHLSNQEAVDIVHNSPRQGIARRLLKAALKEAAKKREMRYSDLTEIHPGVRRHFHDDITVIVVYLNPHPVKTNSWASPLSIRGGYPMHSTS</sequence>
<keyword id="KW-1003">Cell membrane</keyword>
<keyword id="KW-0378">Hydrolase</keyword>
<keyword id="KW-0460">Magnesium</keyword>
<keyword id="KW-0464">Manganese</keyword>
<keyword id="KW-0472">Membrane</keyword>
<keyword id="KW-0479">Metal-binding</keyword>
<keyword id="KW-0904">Protein phosphatase</keyword>
<keyword id="KW-1185">Reference proteome</keyword>
<dbReference type="EC" id="3.1.3.16" evidence="2"/>
<dbReference type="EMBL" id="AL162973">
    <property type="protein sequence ID" value="CAB86030.1"/>
    <property type="status" value="ALT_SEQ"/>
    <property type="molecule type" value="Genomic_DNA"/>
</dbReference>
<dbReference type="EMBL" id="CP002688">
    <property type="protein sequence ID" value="AED90514.1"/>
    <property type="molecule type" value="Genomic_DNA"/>
</dbReference>
<dbReference type="EMBL" id="BT022008">
    <property type="protein sequence ID" value="AAY25420.1"/>
    <property type="molecule type" value="mRNA"/>
</dbReference>
<dbReference type="EMBL" id="BT023482">
    <property type="protein sequence ID" value="AAY57321.1"/>
    <property type="molecule type" value="mRNA"/>
</dbReference>
<dbReference type="PIR" id="T48297">
    <property type="entry name" value="T48297"/>
</dbReference>
<dbReference type="RefSeq" id="NP_195896.2">
    <property type="nucleotide sequence ID" value="NM_120354.3"/>
</dbReference>
<dbReference type="SMR" id="Q501F9"/>
<dbReference type="BioGRID" id="16512">
    <property type="interactions" value="6"/>
</dbReference>
<dbReference type="FunCoup" id="Q501F9">
    <property type="interactions" value="2790"/>
</dbReference>
<dbReference type="IntAct" id="Q501F9">
    <property type="interactions" value="2"/>
</dbReference>
<dbReference type="STRING" id="3702.Q501F9"/>
<dbReference type="PaxDb" id="3702-AT5G02760.1"/>
<dbReference type="ProteomicsDB" id="250973"/>
<dbReference type="EnsemblPlants" id="AT5G02760.1">
    <property type="protein sequence ID" value="AT5G02760.1"/>
    <property type="gene ID" value="AT5G02760"/>
</dbReference>
<dbReference type="GeneID" id="831234"/>
<dbReference type="Gramene" id="AT5G02760.1">
    <property type="protein sequence ID" value="AT5G02760.1"/>
    <property type="gene ID" value="AT5G02760"/>
</dbReference>
<dbReference type="KEGG" id="ath:AT5G02760"/>
<dbReference type="Araport" id="AT5G02760"/>
<dbReference type="TAIR" id="AT5G02760">
    <property type="gene designation" value="APD7"/>
</dbReference>
<dbReference type="eggNOG" id="KOG0700">
    <property type="taxonomic scope" value="Eukaryota"/>
</dbReference>
<dbReference type="HOGENOM" id="CLU_013173_2_0_1"/>
<dbReference type="InParanoid" id="Q501F9"/>
<dbReference type="OMA" id="PCWRIGA"/>
<dbReference type="PhylomeDB" id="Q501F9"/>
<dbReference type="PRO" id="PR:Q501F9"/>
<dbReference type="Proteomes" id="UP000006548">
    <property type="component" value="Chromosome 5"/>
</dbReference>
<dbReference type="ExpressionAtlas" id="Q501F9">
    <property type="expression patterns" value="baseline and differential"/>
</dbReference>
<dbReference type="GO" id="GO:0005737">
    <property type="term" value="C:cytoplasm"/>
    <property type="evidence" value="ECO:0000314"/>
    <property type="project" value="TAIR"/>
</dbReference>
<dbReference type="GO" id="GO:0005886">
    <property type="term" value="C:plasma membrane"/>
    <property type="evidence" value="ECO:0000314"/>
    <property type="project" value="UniProtKB"/>
</dbReference>
<dbReference type="GO" id="GO:0046872">
    <property type="term" value="F:metal ion binding"/>
    <property type="evidence" value="ECO:0007669"/>
    <property type="project" value="UniProtKB-KW"/>
</dbReference>
<dbReference type="GO" id="GO:0016791">
    <property type="term" value="F:phosphatase activity"/>
    <property type="evidence" value="ECO:0000314"/>
    <property type="project" value="TAIR"/>
</dbReference>
<dbReference type="GO" id="GO:0004722">
    <property type="term" value="F:protein serine/threonine phosphatase activity"/>
    <property type="evidence" value="ECO:0007669"/>
    <property type="project" value="UniProtKB-EC"/>
</dbReference>
<dbReference type="GO" id="GO:1900056">
    <property type="term" value="P:negative regulation of leaf senescence"/>
    <property type="evidence" value="ECO:0000315"/>
    <property type="project" value="TAIR"/>
</dbReference>
<dbReference type="CDD" id="cd00143">
    <property type="entry name" value="PP2Cc"/>
    <property type="match status" value="1"/>
</dbReference>
<dbReference type="FunFam" id="3.60.40.10:FF:000008">
    <property type="entry name" value="Phosphatase 2C family protein"/>
    <property type="match status" value="1"/>
</dbReference>
<dbReference type="Gene3D" id="3.60.40.10">
    <property type="entry name" value="PPM-type phosphatase domain"/>
    <property type="match status" value="1"/>
</dbReference>
<dbReference type="InterPro" id="IPR015655">
    <property type="entry name" value="PP2C"/>
</dbReference>
<dbReference type="InterPro" id="IPR000222">
    <property type="entry name" value="PP2C_BS"/>
</dbReference>
<dbReference type="InterPro" id="IPR036457">
    <property type="entry name" value="PPM-type-like_dom_sf"/>
</dbReference>
<dbReference type="InterPro" id="IPR001932">
    <property type="entry name" value="PPM-type_phosphatase-like_dom"/>
</dbReference>
<dbReference type="PANTHER" id="PTHR47992">
    <property type="entry name" value="PROTEIN PHOSPHATASE"/>
    <property type="match status" value="1"/>
</dbReference>
<dbReference type="Pfam" id="PF00481">
    <property type="entry name" value="PP2C"/>
    <property type="match status" value="1"/>
</dbReference>
<dbReference type="SMART" id="SM00331">
    <property type="entry name" value="PP2C_SIG"/>
    <property type="match status" value="1"/>
</dbReference>
<dbReference type="SMART" id="SM00332">
    <property type="entry name" value="PP2Cc"/>
    <property type="match status" value="1"/>
</dbReference>
<dbReference type="SUPFAM" id="SSF81606">
    <property type="entry name" value="PP2C-like"/>
    <property type="match status" value="1"/>
</dbReference>
<dbReference type="PROSITE" id="PS01032">
    <property type="entry name" value="PPM_1"/>
    <property type="match status" value="1"/>
</dbReference>
<dbReference type="PROSITE" id="PS51746">
    <property type="entry name" value="PPM_2"/>
    <property type="match status" value="1"/>
</dbReference>
<gene>
    <name evidence="5" type="primary">PP2C67</name>
    <name evidence="6" type="synonym">PP2C-D1</name>
    <name evidence="8" type="ordered locus">At5g02760</name>
    <name evidence="9" type="ORF">F9G14.70</name>
</gene>
<evidence type="ECO:0000250" key="1">
    <source>
        <dbReference type="UniProtKB" id="P35813"/>
    </source>
</evidence>
<evidence type="ECO:0000250" key="2">
    <source>
        <dbReference type="UniProtKB" id="Q9LHJ9"/>
    </source>
</evidence>
<evidence type="ECO:0000255" key="3">
    <source>
        <dbReference type="PROSITE-ProRule" id="PRU01082"/>
    </source>
</evidence>
<evidence type="ECO:0000269" key="4">
    <source>
    </source>
</evidence>
<evidence type="ECO:0000303" key="5">
    <source>
    </source>
</evidence>
<evidence type="ECO:0000303" key="6">
    <source>
    </source>
</evidence>
<evidence type="ECO:0000305" key="7"/>
<evidence type="ECO:0000312" key="8">
    <source>
        <dbReference type="Araport" id="AT5G02760"/>
    </source>
</evidence>
<evidence type="ECO:0000312" key="9">
    <source>
        <dbReference type="EMBL" id="CAB86030.1"/>
    </source>
</evidence>
<protein>
    <recommendedName>
        <fullName evidence="5">Probable protein phosphatase 2C 67</fullName>
        <shortName evidence="5">AtPP2C67</shortName>
        <ecNumber evidence="2">3.1.3.16</ecNumber>
    </recommendedName>
</protein>
<organism>
    <name type="scientific">Arabidopsis thaliana</name>
    <name type="common">Mouse-ear cress</name>
    <dbReference type="NCBI Taxonomy" id="3702"/>
    <lineage>
        <taxon>Eukaryota</taxon>
        <taxon>Viridiplantae</taxon>
        <taxon>Streptophyta</taxon>
        <taxon>Embryophyta</taxon>
        <taxon>Tracheophyta</taxon>
        <taxon>Spermatophyta</taxon>
        <taxon>Magnoliopsida</taxon>
        <taxon>eudicotyledons</taxon>
        <taxon>Gunneridae</taxon>
        <taxon>Pentapetalae</taxon>
        <taxon>rosids</taxon>
        <taxon>malvids</taxon>
        <taxon>Brassicales</taxon>
        <taxon>Brassicaceae</taxon>
        <taxon>Camelineae</taxon>
        <taxon>Arabidopsis</taxon>
    </lineage>
</organism>
<comment type="function">
    <text evidence="4">Dephosphorylates and represses plasma membrane H(+)-ATPases (PM H(+)-ATPases, e.g. AHA1 and AHA2), thus influencing negatively plant growth and fitness (PubMed:24858935). Promotes the apical hook maintenance of etiolated seedlings (PubMed:24858935).</text>
</comment>
<comment type="catalytic activity">
    <reaction evidence="2">
        <text>O-phospho-L-seryl-[protein] + H2O = L-seryl-[protein] + phosphate</text>
        <dbReference type="Rhea" id="RHEA:20629"/>
        <dbReference type="Rhea" id="RHEA-COMP:9863"/>
        <dbReference type="Rhea" id="RHEA-COMP:11604"/>
        <dbReference type="ChEBI" id="CHEBI:15377"/>
        <dbReference type="ChEBI" id="CHEBI:29999"/>
        <dbReference type="ChEBI" id="CHEBI:43474"/>
        <dbReference type="ChEBI" id="CHEBI:83421"/>
        <dbReference type="EC" id="3.1.3.16"/>
    </reaction>
</comment>
<comment type="catalytic activity">
    <reaction evidence="2">
        <text>O-phospho-L-threonyl-[protein] + H2O = L-threonyl-[protein] + phosphate</text>
        <dbReference type="Rhea" id="RHEA:47004"/>
        <dbReference type="Rhea" id="RHEA-COMP:11060"/>
        <dbReference type="Rhea" id="RHEA-COMP:11605"/>
        <dbReference type="ChEBI" id="CHEBI:15377"/>
        <dbReference type="ChEBI" id="CHEBI:30013"/>
        <dbReference type="ChEBI" id="CHEBI:43474"/>
        <dbReference type="ChEBI" id="CHEBI:61977"/>
        <dbReference type="EC" id="3.1.3.16"/>
    </reaction>
</comment>
<comment type="cofactor">
    <cofactor evidence="1">
        <name>Mg(2+)</name>
        <dbReference type="ChEBI" id="CHEBI:18420"/>
    </cofactor>
    <cofactor evidence="1">
        <name>Mn(2+)</name>
        <dbReference type="ChEBI" id="CHEBI:29035"/>
    </cofactor>
    <text evidence="1">Binds 2 magnesium or manganese ions per subunit.</text>
</comment>
<comment type="subunit">
    <text evidence="4">Interacts with SAUR19 (PubMed:24858935). Interacts with AHA2 at the plasma membrane (PubMed:24858935).</text>
</comment>
<comment type="interaction">
    <interactant intactId="EBI-25520600">
        <id>Q501F9</id>
    </interactant>
    <interactant intactId="EBI-25520581">
        <id>Q41220</id>
        <label>SAUR15</label>
    </interactant>
    <organismsDiffer>false</organismsDiffer>
    <experiments>3</experiments>
</comment>
<comment type="interaction">
    <interactant intactId="EBI-25520600">
        <id>Q501F9</id>
    </interactant>
    <interactant intactId="EBI-25522374">
        <id>Q9FJG0</id>
        <label>SAUR20</label>
    </interactant>
    <organismsDiffer>false</organismsDiffer>
    <experiments>3</experiments>
</comment>
<comment type="subcellular location">
    <subcellularLocation>
        <location evidence="4">Cell membrane</location>
        <topology evidence="4">Peripheral membrane protein</topology>
    </subcellularLocation>
</comment>
<comment type="disruption phenotype">
    <text evidence="4">Reduced apical hook maintenance in etiolated seedlings (PubMed:24858935). The pp2c-d1 pp2c-d2 double mutant displays a long hypocotyl phenotype and strongly reduced apical hook maintenance in etiolated seedlings (PubMed:24858935).</text>
</comment>
<comment type="similarity">
    <text evidence="7">Belongs to the PP2C family.</text>
</comment>
<comment type="sequence caution" evidence="7">
    <conflict type="erroneous gene model prediction">
        <sequence resource="EMBL-CDS" id="CAB86030"/>
    </conflict>
</comment>
<name>P2C67_ARATH</name>
<feature type="chain" id="PRO_0000367988" description="Probable protein phosphatase 2C 67">
    <location>
        <begin position="1"/>
        <end position="370"/>
    </location>
</feature>
<feature type="domain" description="PPM-type phosphatase" evidence="3">
    <location>
        <begin position="35"/>
        <end position="344"/>
    </location>
</feature>
<feature type="binding site" evidence="1">
    <location>
        <position position="77"/>
    </location>
    <ligand>
        <name>Mn(2+)</name>
        <dbReference type="ChEBI" id="CHEBI:29035"/>
        <label>1</label>
    </ligand>
</feature>
<feature type="binding site" evidence="1">
    <location>
        <position position="77"/>
    </location>
    <ligand>
        <name>Mn(2+)</name>
        <dbReference type="ChEBI" id="CHEBI:29035"/>
        <label>2</label>
    </ligand>
</feature>
<feature type="binding site" evidence="1">
    <location>
        <position position="78"/>
    </location>
    <ligand>
        <name>Mn(2+)</name>
        <dbReference type="ChEBI" id="CHEBI:29035"/>
        <label>1</label>
    </ligand>
</feature>
<feature type="binding site" evidence="1">
    <location>
        <position position="276"/>
    </location>
    <ligand>
        <name>Mn(2+)</name>
        <dbReference type="ChEBI" id="CHEBI:29035"/>
        <label>2</label>
    </ligand>
</feature>
<feature type="binding site" evidence="1">
    <location>
        <position position="335"/>
    </location>
    <ligand>
        <name>Mn(2+)</name>
        <dbReference type="ChEBI" id="CHEBI:29035"/>
        <label>2</label>
    </ligand>
</feature>
<feature type="mutagenesis site" description="Phosphatase-dead, unable to repress the plasma membrane H(+)-ATPase AHA2 activity." evidence="4">
    <original>D</original>
    <variation>N</variation>
    <location>
        <position position="276"/>
    </location>
</feature>
<accession>Q501F9</accession>
<accession>Q9LZ09</accession>